<proteinExistence type="evidence at protein level"/>
<protein>
    <recommendedName>
        <fullName>Cytochrome c-555</fullName>
    </recommendedName>
    <alternativeName>
        <fullName>Cytochrome c555</fullName>
    </alternativeName>
</protein>
<evidence type="ECO:0000305" key="1"/>
<accession>P23037</accession>
<sequence>ALEASGCLNCHGTDLTGXPAXPATMPPGMFKGSNQQLKALSEFIHGLSAK</sequence>
<reference key="1">
    <citation type="journal article" date="1991" name="Biochim. Biophys. Acta">
        <title>Two structurally different cytochromes c from Bacillus azotoformans: on the evolution of Gram-positive bacteria.</title>
        <authorList>
            <person name="Hreggvidsson G.O."/>
        </authorList>
    </citation>
    <scope>PROTEIN SEQUENCE</scope>
    <source>
        <strain>ATCC 29788 / DSM 1046 / JCM 12210 / CCM 2849 / CIP R925 / NBRC 15712 / NCIMB 11859 / BAI / 1</strain>
    </source>
</reference>
<feature type="chain" id="PRO_0000108399" description="Cytochrome c-555">
    <location>
        <begin position="1"/>
        <end position="50"/>
    </location>
</feature>
<feature type="binding site" description="covalent">
    <location>
        <position position="7"/>
    </location>
    <ligand>
        <name>heme</name>
        <dbReference type="ChEBI" id="CHEBI:30413"/>
    </ligand>
</feature>
<feature type="binding site" description="covalent">
    <location>
        <position position="10"/>
    </location>
    <ligand>
        <name>heme</name>
        <dbReference type="ChEBI" id="CHEBI:30413"/>
    </ligand>
</feature>
<feature type="binding site" description="axial binding residue">
    <location>
        <position position="11"/>
    </location>
    <ligand>
        <name>heme</name>
        <dbReference type="ChEBI" id="CHEBI:30413"/>
    </ligand>
    <ligandPart>
        <name>Fe</name>
        <dbReference type="ChEBI" id="CHEBI:18248"/>
    </ligandPart>
</feature>
<feature type="binding site" description="axial binding residue">
    <location>
        <position position="25"/>
    </location>
    <ligand>
        <name>heme</name>
        <dbReference type="ChEBI" id="CHEBI:30413"/>
    </ligand>
    <ligandPart>
        <name>Fe</name>
        <dbReference type="ChEBI" id="CHEBI:18248"/>
    </ligandPart>
</feature>
<feature type="non-consecutive residues" evidence="1">
    <location>
        <begin position="22"/>
        <end position="23"/>
    </location>
</feature>
<name>CY555_SCHAZ</name>
<dbReference type="PIR" id="S32546">
    <property type="entry name" value="S32546"/>
</dbReference>
<dbReference type="GO" id="GO:0005886">
    <property type="term" value="C:plasma membrane"/>
    <property type="evidence" value="ECO:0007669"/>
    <property type="project" value="UniProtKB-SubCell"/>
</dbReference>
<dbReference type="GO" id="GO:0009055">
    <property type="term" value="F:electron transfer activity"/>
    <property type="evidence" value="ECO:0007669"/>
    <property type="project" value="InterPro"/>
</dbReference>
<dbReference type="GO" id="GO:0020037">
    <property type="term" value="F:heme binding"/>
    <property type="evidence" value="ECO:0007669"/>
    <property type="project" value="InterPro"/>
</dbReference>
<dbReference type="GO" id="GO:0046872">
    <property type="term" value="F:metal ion binding"/>
    <property type="evidence" value="ECO:0007669"/>
    <property type="project" value="UniProtKB-KW"/>
</dbReference>
<dbReference type="InterPro" id="IPR036909">
    <property type="entry name" value="Cyt_c-like_dom_sf"/>
</dbReference>
<dbReference type="SUPFAM" id="SSF46626">
    <property type="entry name" value="Cytochrome c"/>
    <property type="match status" value="1"/>
</dbReference>
<keyword id="KW-1003">Cell membrane</keyword>
<keyword id="KW-0903">Direct protein sequencing</keyword>
<keyword id="KW-0249">Electron transport</keyword>
<keyword id="KW-0349">Heme</keyword>
<keyword id="KW-0408">Iron</keyword>
<keyword id="KW-0472">Membrane</keyword>
<keyword id="KW-0479">Metal-binding</keyword>
<keyword id="KW-0813">Transport</keyword>
<organism>
    <name type="scientific">Schinkia azotoformans</name>
    <name type="common">Bacillus azotoformans</name>
    <dbReference type="NCBI Taxonomy" id="1454"/>
    <lineage>
        <taxon>Bacteria</taxon>
        <taxon>Bacillati</taxon>
        <taxon>Bacillota</taxon>
        <taxon>Bacilli</taxon>
        <taxon>Bacillales</taxon>
        <taxon>Bacillaceae</taxon>
        <taxon>Calidifontibacillus/Schinkia group</taxon>
        <taxon>Schinkia</taxon>
    </lineage>
</organism>
<comment type="subcellular location">
    <subcellularLocation>
        <location>Cell membrane</location>
        <topology>Peripheral membrane protein</topology>
    </subcellularLocation>
</comment>
<comment type="PTM">
    <text>Binds 1 heme group per subunit.</text>
</comment>